<comment type="function">
    <text evidence="1">Catalyzes the phosphorylation of pantothenate (Pan), the first step in CoA biosynthesis.</text>
</comment>
<comment type="catalytic activity">
    <reaction evidence="1">
        <text>(R)-pantothenate + ATP = (R)-4'-phosphopantothenate + ADP + H(+)</text>
        <dbReference type="Rhea" id="RHEA:16373"/>
        <dbReference type="ChEBI" id="CHEBI:10986"/>
        <dbReference type="ChEBI" id="CHEBI:15378"/>
        <dbReference type="ChEBI" id="CHEBI:29032"/>
        <dbReference type="ChEBI" id="CHEBI:30616"/>
        <dbReference type="ChEBI" id="CHEBI:456216"/>
        <dbReference type="EC" id="2.7.1.33"/>
    </reaction>
</comment>
<comment type="cofactor">
    <cofactor evidence="1">
        <name>NH4(+)</name>
        <dbReference type="ChEBI" id="CHEBI:28938"/>
    </cofactor>
    <cofactor evidence="1">
        <name>K(+)</name>
        <dbReference type="ChEBI" id="CHEBI:29103"/>
    </cofactor>
    <text evidence="1">A monovalent cation. Ammonium or potassium.</text>
</comment>
<comment type="pathway">
    <text evidence="1">Cofactor biosynthesis; coenzyme A biosynthesis; CoA from (R)-pantothenate: step 1/5.</text>
</comment>
<comment type="subunit">
    <text evidence="1">Homodimer.</text>
</comment>
<comment type="subcellular location">
    <subcellularLocation>
        <location evidence="1">Cytoplasm</location>
    </subcellularLocation>
</comment>
<comment type="similarity">
    <text evidence="1">Belongs to the type III pantothenate kinase family.</text>
</comment>
<name>COAX_XANCP</name>
<protein>
    <recommendedName>
        <fullName evidence="1">Type III pantothenate kinase</fullName>
        <ecNumber evidence="1">2.7.1.33</ecNumber>
    </recommendedName>
    <alternativeName>
        <fullName evidence="1">PanK-III</fullName>
    </alternativeName>
    <alternativeName>
        <fullName evidence="1">Pantothenic acid kinase</fullName>
    </alternativeName>
</protein>
<reference key="1">
    <citation type="journal article" date="2002" name="Nature">
        <title>Comparison of the genomes of two Xanthomonas pathogens with differing host specificities.</title>
        <authorList>
            <person name="da Silva A.C.R."/>
            <person name="Ferro J.A."/>
            <person name="Reinach F.C."/>
            <person name="Farah C.S."/>
            <person name="Furlan L.R."/>
            <person name="Quaggio R.B."/>
            <person name="Monteiro-Vitorello C.B."/>
            <person name="Van Sluys M.A."/>
            <person name="Almeida N.F. Jr."/>
            <person name="Alves L.M.C."/>
            <person name="do Amaral A.M."/>
            <person name="Bertolini M.C."/>
            <person name="Camargo L.E.A."/>
            <person name="Camarotte G."/>
            <person name="Cannavan F."/>
            <person name="Cardozo J."/>
            <person name="Chambergo F."/>
            <person name="Ciapina L.P."/>
            <person name="Cicarelli R.M.B."/>
            <person name="Coutinho L.L."/>
            <person name="Cursino-Santos J.R."/>
            <person name="El-Dorry H."/>
            <person name="Faria J.B."/>
            <person name="Ferreira A.J.S."/>
            <person name="Ferreira R.C.C."/>
            <person name="Ferro M.I.T."/>
            <person name="Formighieri E.F."/>
            <person name="Franco M.C."/>
            <person name="Greggio C.C."/>
            <person name="Gruber A."/>
            <person name="Katsuyama A.M."/>
            <person name="Kishi L.T."/>
            <person name="Leite R.P."/>
            <person name="Lemos E.G.M."/>
            <person name="Lemos M.V.F."/>
            <person name="Locali E.C."/>
            <person name="Machado M.A."/>
            <person name="Madeira A.M.B.N."/>
            <person name="Martinez-Rossi N.M."/>
            <person name="Martins E.C."/>
            <person name="Meidanis J."/>
            <person name="Menck C.F.M."/>
            <person name="Miyaki C.Y."/>
            <person name="Moon D.H."/>
            <person name="Moreira L.M."/>
            <person name="Novo M.T.M."/>
            <person name="Okura V.K."/>
            <person name="Oliveira M.C."/>
            <person name="Oliveira V.R."/>
            <person name="Pereira H.A."/>
            <person name="Rossi A."/>
            <person name="Sena J.A.D."/>
            <person name="Silva C."/>
            <person name="de Souza R.F."/>
            <person name="Spinola L.A.F."/>
            <person name="Takita M.A."/>
            <person name="Tamura R.E."/>
            <person name="Teixeira E.C."/>
            <person name="Tezza R.I.D."/>
            <person name="Trindade dos Santos M."/>
            <person name="Truffi D."/>
            <person name="Tsai S.M."/>
            <person name="White F.F."/>
            <person name="Setubal J.C."/>
            <person name="Kitajima J.P."/>
        </authorList>
    </citation>
    <scope>NUCLEOTIDE SEQUENCE [LARGE SCALE GENOMIC DNA]</scope>
    <source>
        <strain>ATCC 33913 / DSM 3586 / NCPPB 528 / LMG 568 / P 25</strain>
    </source>
</reference>
<accession>Q8P3Y1</accession>
<gene>
    <name evidence="1" type="primary">coaX</name>
    <name type="ordered locus">XCC3937</name>
</gene>
<keyword id="KW-0067">ATP-binding</keyword>
<keyword id="KW-0173">Coenzyme A biosynthesis</keyword>
<keyword id="KW-0963">Cytoplasm</keyword>
<keyword id="KW-0418">Kinase</keyword>
<keyword id="KW-0547">Nucleotide-binding</keyword>
<keyword id="KW-0630">Potassium</keyword>
<keyword id="KW-1185">Reference proteome</keyword>
<keyword id="KW-0808">Transferase</keyword>
<sequence>MSEWLFDLGNSRFKYAPLDGTRAGDVQAWAHGAEAMDTAALSALPSGKVAHVASVAAAGLTERVLASLRTRFEQVRVVRTAAACAGVRIAYADPSRFGVDRFLALLGARGDAPVLVAGVGTALTIDVLGADGQHHGGRIAASPTTMREALHARAVQLPPTGGAYAELANDTDDALTSGCDGAAVALIERSLQHAARTLGMPVCLLVHGGGAPPLLPLLPTAEFRAALVLDGLATWATHSAAP</sequence>
<feature type="chain" id="PRO_0000270909" description="Type III pantothenate kinase">
    <location>
        <begin position="1"/>
        <end position="242"/>
    </location>
</feature>
<feature type="active site" description="Proton acceptor" evidence="1">
    <location>
        <position position="100"/>
    </location>
</feature>
<feature type="binding site" evidence="1">
    <location>
        <begin position="7"/>
        <end position="14"/>
    </location>
    <ligand>
        <name>ATP</name>
        <dbReference type="ChEBI" id="CHEBI:30616"/>
    </ligand>
</feature>
<feature type="binding site" evidence="1">
    <location>
        <position position="91"/>
    </location>
    <ligand>
        <name>substrate</name>
    </ligand>
</feature>
<feature type="binding site" evidence="1">
    <location>
        <begin position="98"/>
        <end position="101"/>
    </location>
    <ligand>
        <name>substrate</name>
    </ligand>
</feature>
<feature type="binding site" evidence="1">
    <location>
        <position position="121"/>
    </location>
    <ligand>
        <name>ATP</name>
        <dbReference type="ChEBI" id="CHEBI:30616"/>
    </ligand>
</feature>
<feature type="binding site" evidence="1">
    <location>
        <position position="171"/>
    </location>
    <ligand>
        <name>substrate</name>
    </ligand>
</feature>
<dbReference type="EC" id="2.7.1.33" evidence="1"/>
<dbReference type="EMBL" id="AE008922">
    <property type="protein sequence ID" value="AAM43158.1"/>
    <property type="molecule type" value="Genomic_DNA"/>
</dbReference>
<dbReference type="RefSeq" id="NP_639276.1">
    <property type="nucleotide sequence ID" value="NC_003902.1"/>
</dbReference>
<dbReference type="RefSeq" id="WP_011039010.1">
    <property type="nucleotide sequence ID" value="NC_003902.1"/>
</dbReference>
<dbReference type="SMR" id="Q8P3Y1"/>
<dbReference type="STRING" id="190485.XCC3937"/>
<dbReference type="EnsemblBacteria" id="AAM43158">
    <property type="protein sequence ID" value="AAM43158"/>
    <property type="gene ID" value="XCC3937"/>
</dbReference>
<dbReference type="KEGG" id="xcc:XCC3937"/>
<dbReference type="PATRIC" id="fig|190485.4.peg.4212"/>
<dbReference type="eggNOG" id="COG1521">
    <property type="taxonomic scope" value="Bacteria"/>
</dbReference>
<dbReference type="HOGENOM" id="CLU_066627_0_0_6"/>
<dbReference type="OrthoDB" id="9781305at2"/>
<dbReference type="UniPathway" id="UPA00241">
    <property type="reaction ID" value="UER00352"/>
</dbReference>
<dbReference type="Proteomes" id="UP000001010">
    <property type="component" value="Chromosome"/>
</dbReference>
<dbReference type="GO" id="GO:0005737">
    <property type="term" value="C:cytoplasm"/>
    <property type="evidence" value="ECO:0007669"/>
    <property type="project" value="UniProtKB-SubCell"/>
</dbReference>
<dbReference type="GO" id="GO:0005524">
    <property type="term" value="F:ATP binding"/>
    <property type="evidence" value="ECO:0007669"/>
    <property type="project" value="UniProtKB-UniRule"/>
</dbReference>
<dbReference type="GO" id="GO:0004594">
    <property type="term" value="F:pantothenate kinase activity"/>
    <property type="evidence" value="ECO:0007669"/>
    <property type="project" value="UniProtKB-UniRule"/>
</dbReference>
<dbReference type="GO" id="GO:0015937">
    <property type="term" value="P:coenzyme A biosynthetic process"/>
    <property type="evidence" value="ECO:0007669"/>
    <property type="project" value="UniProtKB-UniRule"/>
</dbReference>
<dbReference type="Gene3D" id="3.30.420.40">
    <property type="match status" value="2"/>
</dbReference>
<dbReference type="HAMAP" id="MF_01274">
    <property type="entry name" value="Pantothen_kinase_3"/>
    <property type="match status" value="1"/>
</dbReference>
<dbReference type="InterPro" id="IPR043129">
    <property type="entry name" value="ATPase_NBD"/>
</dbReference>
<dbReference type="InterPro" id="IPR004619">
    <property type="entry name" value="Type_III_PanK"/>
</dbReference>
<dbReference type="NCBIfam" id="TIGR00671">
    <property type="entry name" value="baf"/>
    <property type="match status" value="1"/>
</dbReference>
<dbReference type="NCBIfam" id="NF009864">
    <property type="entry name" value="PRK13327.1"/>
    <property type="match status" value="1"/>
</dbReference>
<dbReference type="PANTHER" id="PTHR34265">
    <property type="entry name" value="TYPE III PANTOTHENATE KINASE"/>
    <property type="match status" value="1"/>
</dbReference>
<dbReference type="PANTHER" id="PTHR34265:SF1">
    <property type="entry name" value="TYPE III PANTOTHENATE KINASE"/>
    <property type="match status" value="1"/>
</dbReference>
<dbReference type="Pfam" id="PF03309">
    <property type="entry name" value="Pan_kinase"/>
    <property type="match status" value="1"/>
</dbReference>
<dbReference type="SUPFAM" id="SSF53067">
    <property type="entry name" value="Actin-like ATPase domain"/>
    <property type="match status" value="2"/>
</dbReference>
<proteinExistence type="inferred from homology"/>
<evidence type="ECO:0000255" key="1">
    <source>
        <dbReference type="HAMAP-Rule" id="MF_01274"/>
    </source>
</evidence>
<organism>
    <name type="scientific">Xanthomonas campestris pv. campestris (strain ATCC 33913 / DSM 3586 / NCPPB 528 / LMG 568 / P 25)</name>
    <dbReference type="NCBI Taxonomy" id="190485"/>
    <lineage>
        <taxon>Bacteria</taxon>
        <taxon>Pseudomonadati</taxon>
        <taxon>Pseudomonadota</taxon>
        <taxon>Gammaproteobacteria</taxon>
        <taxon>Lysobacterales</taxon>
        <taxon>Lysobacteraceae</taxon>
        <taxon>Xanthomonas</taxon>
    </lineage>
</organism>